<feature type="chain" id="PRO_0000143422" description="Maturase K">
    <location>
        <begin position="1"/>
        <end position="511"/>
    </location>
</feature>
<accession>Q85BR7</accession>
<organism>
    <name type="scientific">Hordeum murinum subsp. leporinum</name>
    <name type="common">Mouse barley</name>
    <name type="synonym">Hordeum leporinum</name>
    <dbReference type="NCBI Taxonomy" id="98112"/>
    <lineage>
        <taxon>Eukaryota</taxon>
        <taxon>Viridiplantae</taxon>
        <taxon>Streptophyta</taxon>
        <taxon>Embryophyta</taxon>
        <taxon>Tracheophyta</taxon>
        <taxon>Spermatophyta</taxon>
        <taxon>Magnoliopsida</taxon>
        <taxon>Liliopsida</taxon>
        <taxon>Poales</taxon>
        <taxon>Poaceae</taxon>
        <taxon>BOP clade</taxon>
        <taxon>Pooideae</taxon>
        <taxon>Triticodae</taxon>
        <taxon>Triticeae</taxon>
        <taxon>Hordeinae</taxon>
        <taxon>Hordeum</taxon>
    </lineage>
</organism>
<evidence type="ECO:0000255" key="1">
    <source>
        <dbReference type="HAMAP-Rule" id="MF_01390"/>
    </source>
</evidence>
<reference key="1">
    <citation type="journal article" date="2002" name="Genome">
        <title>Molecular phylogeny of the genus Hordeum using three chloroplast DNA sequences.</title>
        <authorList>
            <person name="Nishikawa T."/>
            <person name="Salomon B."/>
            <person name="Komatsuda T."/>
            <person name="von Bothmer R."/>
            <person name="Kadowaki K."/>
        </authorList>
    </citation>
    <scope>NUCLEOTIDE SEQUENCE [GENOMIC DNA]</scope>
    <source>
        <strain>Isolate H0561</strain>
        <strain>Isolate H0812</strain>
    </source>
</reference>
<dbReference type="EMBL" id="AB078121">
    <property type="protein sequence ID" value="BAC54873.1"/>
    <property type="molecule type" value="Genomic_DNA"/>
</dbReference>
<dbReference type="EMBL" id="AB078122">
    <property type="protein sequence ID" value="BAC54874.1"/>
    <property type="molecule type" value="Genomic_DNA"/>
</dbReference>
<dbReference type="GO" id="GO:0009507">
    <property type="term" value="C:chloroplast"/>
    <property type="evidence" value="ECO:0007669"/>
    <property type="project" value="UniProtKB-SubCell"/>
</dbReference>
<dbReference type="GO" id="GO:0003723">
    <property type="term" value="F:RNA binding"/>
    <property type="evidence" value="ECO:0007669"/>
    <property type="project" value="UniProtKB-KW"/>
</dbReference>
<dbReference type="GO" id="GO:0006397">
    <property type="term" value="P:mRNA processing"/>
    <property type="evidence" value="ECO:0007669"/>
    <property type="project" value="UniProtKB-KW"/>
</dbReference>
<dbReference type="GO" id="GO:0008380">
    <property type="term" value="P:RNA splicing"/>
    <property type="evidence" value="ECO:0007669"/>
    <property type="project" value="UniProtKB-UniRule"/>
</dbReference>
<dbReference type="GO" id="GO:0008033">
    <property type="term" value="P:tRNA processing"/>
    <property type="evidence" value="ECO:0007669"/>
    <property type="project" value="UniProtKB-KW"/>
</dbReference>
<dbReference type="HAMAP" id="MF_01390">
    <property type="entry name" value="MatK"/>
    <property type="match status" value="1"/>
</dbReference>
<dbReference type="InterPro" id="IPR024937">
    <property type="entry name" value="Domain_X"/>
</dbReference>
<dbReference type="InterPro" id="IPR002866">
    <property type="entry name" value="Maturase_MatK"/>
</dbReference>
<dbReference type="InterPro" id="IPR024942">
    <property type="entry name" value="Maturase_MatK_N"/>
</dbReference>
<dbReference type="PANTHER" id="PTHR34811">
    <property type="entry name" value="MATURASE K"/>
    <property type="match status" value="1"/>
</dbReference>
<dbReference type="PANTHER" id="PTHR34811:SF1">
    <property type="entry name" value="MATURASE K"/>
    <property type="match status" value="1"/>
</dbReference>
<dbReference type="Pfam" id="PF01348">
    <property type="entry name" value="Intron_maturas2"/>
    <property type="match status" value="1"/>
</dbReference>
<dbReference type="Pfam" id="PF01824">
    <property type="entry name" value="MatK_N"/>
    <property type="match status" value="1"/>
</dbReference>
<protein>
    <recommendedName>
        <fullName evidence="1">Maturase K</fullName>
    </recommendedName>
    <alternativeName>
        <fullName evidence="1">Intron maturase</fullName>
    </alternativeName>
</protein>
<keyword id="KW-0150">Chloroplast</keyword>
<keyword id="KW-0507">mRNA processing</keyword>
<keyword id="KW-0934">Plastid</keyword>
<keyword id="KW-0694">RNA-binding</keyword>
<keyword id="KW-0819">tRNA processing</keyword>
<proteinExistence type="inferred from homology"/>
<name>MATK_HORML</name>
<comment type="function">
    <text evidence="1">Usually encoded in the trnK tRNA gene intron. Probably assists in splicing its own and other chloroplast group II introns.</text>
</comment>
<comment type="subcellular location">
    <subcellularLocation>
        <location>Plastid</location>
        <location>Chloroplast</location>
    </subcellularLocation>
</comment>
<comment type="similarity">
    <text evidence="1">Belongs to the intron maturase 2 family. MatK subfamily.</text>
</comment>
<sequence>MEKFEGYSEKHKSRQQYFVYPLLFQEYIYAFAHDYGLNGSEPVEIVSCNNKKFSSLLVKRLIIRMYQQNFLDNSVNHPNQDRLLDYKNYFYSEFYSQILSEGFAIVVEIPFSLRELSCPKEKEIPKFQNLRSIHSIFPFLEDKFLHLDYLSHIEIPYPIHLEILVQLLQYRIQDVPSLHLLRFFLNYYSNWNSFITSMKSIFFFQKENKRLFKFLYNSYVSEYEFFLLFLRKQSSCLPLASSGTFLERIHFSRKMEHFGIMYPGFSRKTLWFFMDPLMHYVRYQGKAILASKGSFFLKKKWKCYLINFWQYYFFFWTQPRRIHINQLANSCFDFMGYLSSVPKSPLLVRNQMLENSFLIDTRMKKFDTIVPATLLIGYLSKAQFCTGSGHPISKPIWTDLSDWDILDRFGRICRNLFHYHSGSSKKRTLYRLKYILRLSCARTLARKHKSTVRTFMQRLGSAFLEEFFTEEEQVFSLMFTKTTLFSFSGSHTERIWYLDIIRINDLVNPLN</sequence>
<geneLocation type="chloroplast"/>
<gene>
    <name evidence="1" type="primary">matK</name>
</gene>